<reference key="1">
    <citation type="journal article" date="2009" name="Proc. Natl. Acad. Sci. U.S.A.">
        <title>Biogeography of the Sulfolobus islandicus pan-genome.</title>
        <authorList>
            <person name="Reno M.L."/>
            <person name="Held N.L."/>
            <person name="Fields C.J."/>
            <person name="Burke P.V."/>
            <person name="Whitaker R.J."/>
        </authorList>
    </citation>
    <scope>NUCLEOTIDE SEQUENCE [LARGE SCALE GENOMIC DNA]</scope>
    <source>
        <strain>Y.G.57.14 / Yellowstone #1</strain>
    </source>
</reference>
<feature type="chain" id="PRO_1000212384" description="Protein YG5714_2063">
    <location>
        <begin position="1"/>
        <end position="227"/>
    </location>
</feature>
<feature type="domain" description="AMMECR1" evidence="1">
    <location>
        <begin position="15"/>
        <end position="209"/>
    </location>
</feature>
<name>Y2063_SACI7</name>
<sequence length="227" mass="25711">MIQGDLVQIQELNNEIGRFLIEIARKAIKEEFKLDKLDLSNYNNPILDKKGLAFVTLEKITYNTSSLRGCIGYVEAVAPLKQIVASAAKAAAFSDPRFNPLQKDELSEIIIEVTVLTKPEEIKVKDRWDLPKIIKVGEDGLIVEKGILHSGLLLPQVPMEYCWDEETFLAETCIKASLEPDCWLDNSVRIKRFHGIIFRETRPDGSDIIVVKPSDIKCKLNELLNNF</sequence>
<accession>C3N830</accession>
<dbReference type="EMBL" id="CP001403">
    <property type="protein sequence ID" value="ACP46317.1"/>
    <property type="molecule type" value="Genomic_DNA"/>
</dbReference>
<dbReference type="SMR" id="C3N830"/>
<dbReference type="KEGG" id="siy:YG5714_2063"/>
<dbReference type="HOGENOM" id="CLU_095686_1_1_2"/>
<dbReference type="Proteomes" id="UP000002308">
    <property type="component" value="Chromosome"/>
</dbReference>
<dbReference type="Gene3D" id="3.30.700.20">
    <property type="entry name" value="Hypothetical protein ph0010, domain 1"/>
    <property type="match status" value="1"/>
</dbReference>
<dbReference type="Gene3D" id="3.30.1490.150">
    <property type="entry name" value="Hypothetical protein ph0010, domain 2"/>
    <property type="match status" value="1"/>
</dbReference>
<dbReference type="HAMAP" id="MF_00645">
    <property type="entry name" value="AMMECR1"/>
    <property type="match status" value="1"/>
</dbReference>
<dbReference type="InterPro" id="IPR023473">
    <property type="entry name" value="AMMECR1"/>
</dbReference>
<dbReference type="InterPro" id="IPR036071">
    <property type="entry name" value="AMMECR1_dom_sf"/>
</dbReference>
<dbReference type="InterPro" id="IPR002733">
    <property type="entry name" value="AMMECR1_domain"/>
</dbReference>
<dbReference type="InterPro" id="IPR027485">
    <property type="entry name" value="AMMECR1_N"/>
</dbReference>
<dbReference type="InterPro" id="IPR027623">
    <property type="entry name" value="AmmeMemoSam_A"/>
</dbReference>
<dbReference type="InterPro" id="IPR023472">
    <property type="entry name" value="Uncharacterised_MJ0810"/>
</dbReference>
<dbReference type="NCBIfam" id="TIGR04335">
    <property type="entry name" value="AmmeMemoSam_A"/>
    <property type="match status" value="1"/>
</dbReference>
<dbReference type="NCBIfam" id="TIGR00296">
    <property type="entry name" value="TIGR00296 family protein"/>
    <property type="match status" value="1"/>
</dbReference>
<dbReference type="PANTHER" id="PTHR13016:SF0">
    <property type="entry name" value="AMME SYNDROME CANDIDATE GENE 1 PROTEIN"/>
    <property type="match status" value="1"/>
</dbReference>
<dbReference type="PANTHER" id="PTHR13016">
    <property type="entry name" value="AMMECR1 HOMOLOG"/>
    <property type="match status" value="1"/>
</dbReference>
<dbReference type="Pfam" id="PF01871">
    <property type="entry name" value="AMMECR1"/>
    <property type="match status" value="1"/>
</dbReference>
<dbReference type="SUPFAM" id="SSF143447">
    <property type="entry name" value="AMMECR1-like"/>
    <property type="match status" value="1"/>
</dbReference>
<dbReference type="PROSITE" id="PS51112">
    <property type="entry name" value="AMMECR1"/>
    <property type="match status" value="1"/>
</dbReference>
<proteinExistence type="inferred from homology"/>
<protein>
    <recommendedName>
        <fullName evidence="1">Protein YG5714_2063</fullName>
    </recommendedName>
</protein>
<gene>
    <name type="ordered locus">YG5714_2063</name>
</gene>
<evidence type="ECO:0000255" key="1">
    <source>
        <dbReference type="HAMAP-Rule" id="MF_00645"/>
    </source>
</evidence>
<organism>
    <name type="scientific">Saccharolobus islandicus (strain Y.G.57.14 / Yellowstone #1)</name>
    <name type="common">Sulfolobus islandicus</name>
    <dbReference type="NCBI Taxonomy" id="439386"/>
    <lineage>
        <taxon>Archaea</taxon>
        <taxon>Thermoproteota</taxon>
        <taxon>Thermoprotei</taxon>
        <taxon>Sulfolobales</taxon>
        <taxon>Sulfolobaceae</taxon>
        <taxon>Saccharolobus</taxon>
    </lineage>
</organism>